<name>DNLJ_MACCJ</name>
<feature type="chain" id="PRO_0000380413" description="DNA ligase">
    <location>
        <begin position="1"/>
        <end position="663"/>
    </location>
</feature>
<feature type="domain" description="BRCT" evidence="1">
    <location>
        <begin position="585"/>
        <end position="663"/>
    </location>
</feature>
<feature type="active site" description="N6-AMP-lysine intermediate" evidence="1">
    <location>
        <position position="111"/>
    </location>
</feature>
<feature type="binding site" evidence="1">
    <location>
        <begin position="31"/>
        <end position="35"/>
    </location>
    <ligand>
        <name>NAD(+)</name>
        <dbReference type="ChEBI" id="CHEBI:57540"/>
    </ligand>
</feature>
<feature type="binding site" evidence="1">
    <location>
        <begin position="80"/>
        <end position="81"/>
    </location>
    <ligand>
        <name>NAD(+)</name>
        <dbReference type="ChEBI" id="CHEBI:57540"/>
    </ligand>
</feature>
<feature type="binding site" evidence="1">
    <location>
        <position position="109"/>
    </location>
    <ligand>
        <name>NAD(+)</name>
        <dbReference type="ChEBI" id="CHEBI:57540"/>
    </ligand>
</feature>
<feature type="binding site" evidence="1">
    <location>
        <position position="132"/>
    </location>
    <ligand>
        <name>NAD(+)</name>
        <dbReference type="ChEBI" id="CHEBI:57540"/>
    </ligand>
</feature>
<feature type="binding site" evidence="1">
    <location>
        <position position="166"/>
    </location>
    <ligand>
        <name>NAD(+)</name>
        <dbReference type="ChEBI" id="CHEBI:57540"/>
    </ligand>
</feature>
<feature type="binding site" evidence="1">
    <location>
        <position position="282"/>
    </location>
    <ligand>
        <name>NAD(+)</name>
        <dbReference type="ChEBI" id="CHEBI:57540"/>
    </ligand>
</feature>
<feature type="binding site" evidence="1">
    <location>
        <position position="306"/>
    </location>
    <ligand>
        <name>NAD(+)</name>
        <dbReference type="ChEBI" id="CHEBI:57540"/>
    </ligand>
</feature>
<feature type="binding site" evidence="1">
    <location>
        <position position="400"/>
    </location>
    <ligand>
        <name>Zn(2+)</name>
        <dbReference type="ChEBI" id="CHEBI:29105"/>
    </ligand>
</feature>
<feature type="binding site" evidence="1">
    <location>
        <position position="403"/>
    </location>
    <ligand>
        <name>Zn(2+)</name>
        <dbReference type="ChEBI" id="CHEBI:29105"/>
    </ligand>
</feature>
<feature type="binding site" evidence="1">
    <location>
        <position position="418"/>
    </location>
    <ligand>
        <name>Zn(2+)</name>
        <dbReference type="ChEBI" id="CHEBI:29105"/>
    </ligand>
</feature>
<feature type="binding site" evidence="1">
    <location>
        <position position="423"/>
    </location>
    <ligand>
        <name>Zn(2+)</name>
        <dbReference type="ChEBI" id="CHEBI:29105"/>
    </ligand>
</feature>
<gene>
    <name evidence="1" type="primary">ligA</name>
    <name type="ordered locus">MCCL_1641</name>
</gene>
<proteinExistence type="inferred from homology"/>
<protein>
    <recommendedName>
        <fullName evidence="1">DNA ligase</fullName>
        <ecNumber evidence="1">6.5.1.2</ecNumber>
    </recommendedName>
    <alternativeName>
        <fullName evidence="1">Polydeoxyribonucleotide synthase [NAD(+)]</fullName>
    </alternativeName>
</protein>
<organism>
    <name type="scientific">Macrococcus caseolyticus (strain JCSC5402)</name>
    <name type="common">Macrococcoides caseolyticum</name>
    <dbReference type="NCBI Taxonomy" id="458233"/>
    <lineage>
        <taxon>Bacteria</taxon>
        <taxon>Bacillati</taxon>
        <taxon>Bacillota</taxon>
        <taxon>Bacilli</taxon>
        <taxon>Bacillales</taxon>
        <taxon>Staphylococcaceae</taxon>
        <taxon>Macrococcoides</taxon>
    </lineage>
</organism>
<dbReference type="EC" id="6.5.1.2" evidence="1"/>
<dbReference type="EMBL" id="AP009484">
    <property type="protein sequence ID" value="BAH18348.1"/>
    <property type="molecule type" value="Genomic_DNA"/>
</dbReference>
<dbReference type="RefSeq" id="WP_012657542.1">
    <property type="nucleotide sequence ID" value="NC_011999.1"/>
</dbReference>
<dbReference type="SMR" id="B9E830"/>
<dbReference type="STRING" id="458233.MCCL_1641"/>
<dbReference type="KEGG" id="mcl:MCCL_1641"/>
<dbReference type="eggNOG" id="COG0272">
    <property type="taxonomic scope" value="Bacteria"/>
</dbReference>
<dbReference type="HOGENOM" id="CLU_007764_2_1_9"/>
<dbReference type="OrthoDB" id="9759736at2"/>
<dbReference type="Proteomes" id="UP000001383">
    <property type="component" value="Chromosome"/>
</dbReference>
<dbReference type="GO" id="GO:0005829">
    <property type="term" value="C:cytosol"/>
    <property type="evidence" value="ECO:0007669"/>
    <property type="project" value="TreeGrafter"/>
</dbReference>
<dbReference type="GO" id="GO:0003677">
    <property type="term" value="F:DNA binding"/>
    <property type="evidence" value="ECO:0007669"/>
    <property type="project" value="InterPro"/>
</dbReference>
<dbReference type="GO" id="GO:0003911">
    <property type="term" value="F:DNA ligase (NAD+) activity"/>
    <property type="evidence" value="ECO:0007669"/>
    <property type="project" value="UniProtKB-UniRule"/>
</dbReference>
<dbReference type="GO" id="GO:0046872">
    <property type="term" value="F:metal ion binding"/>
    <property type="evidence" value="ECO:0007669"/>
    <property type="project" value="UniProtKB-KW"/>
</dbReference>
<dbReference type="GO" id="GO:0006281">
    <property type="term" value="P:DNA repair"/>
    <property type="evidence" value="ECO:0007669"/>
    <property type="project" value="UniProtKB-KW"/>
</dbReference>
<dbReference type="GO" id="GO:0006260">
    <property type="term" value="P:DNA replication"/>
    <property type="evidence" value="ECO:0007669"/>
    <property type="project" value="UniProtKB-KW"/>
</dbReference>
<dbReference type="CDD" id="cd17748">
    <property type="entry name" value="BRCT_DNA_ligase_like"/>
    <property type="match status" value="1"/>
</dbReference>
<dbReference type="CDD" id="cd00114">
    <property type="entry name" value="LIGANc"/>
    <property type="match status" value="1"/>
</dbReference>
<dbReference type="FunFam" id="1.10.150.20:FF:000006">
    <property type="entry name" value="DNA ligase"/>
    <property type="match status" value="1"/>
</dbReference>
<dbReference type="FunFam" id="1.10.150.20:FF:000007">
    <property type="entry name" value="DNA ligase"/>
    <property type="match status" value="1"/>
</dbReference>
<dbReference type="FunFam" id="1.10.287.610:FF:000002">
    <property type="entry name" value="DNA ligase"/>
    <property type="match status" value="1"/>
</dbReference>
<dbReference type="FunFam" id="2.40.50.140:FF:000012">
    <property type="entry name" value="DNA ligase"/>
    <property type="match status" value="1"/>
</dbReference>
<dbReference type="FunFam" id="3.30.470.30:FF:000001">
    <property type="entry name" value="DNA ligase"/>
    <property type="match status" value="1"/>
</dbReference>
<dbReference type="Gene3D" id="6.20.10.30">
    <property type="match status" value="1"/>
</dbReference>
<dbReference type="Gene3D" id="1.10.150.20">
    <property type="entry name" value="5' to 3' exonuclease, C-terminal subdomain"/>
    <property type="match status" value="2"/>
</dbReference>
<dbReference type="Gene3D" id="3.40.50.10190">
    <property type="entry name" value="BRCT domain"/>
    <property type="match status" value="1"/>
</dbReference>
<dbReference type="Gene3D" id="3.30.470.30">
    <property type="entry name" value="DNA ligase/mRNA capping enzyme"/>
    <property type="match status" value="1"/>
</dbReference>
<dbReference type="Gene3D" id="1.10.287.610">
    <property type="entry name" value="Helix hairpin bin"/>
    <property type="match status" value="1"/>
</dbReference>
<dbReference type="Gene3D" id="2.40.50.140">
    <property type="entry name" value="Nucleic acid-binding proteins"/>
    <property type="match status" value="1"/>
</dbReference>
<dbReference type="HAMAP" id="MF_01588">
    <property type="entry name" value="DNA_ligase_A"/>
    <property type="match status" value="1"/>
</dbReference>
<dbReference type="InterPro" id="IPR001357">
    <property type="entry name" value="BRCT_dom"/>
</dbReference>
<dbReference type="InterPro" id="IPR036420">
    <property type="entry name" value="BRCT_dom_sf"/>
</dbReference>
<dbReference type="InterPro" id="IPR041663">
    <property type="entry name" value="DisA/LigA_HHH"/>
</dbReference>
<dbReference type="InterPro" id="IPR001679">
    <property type="entry name" value="DNA_ligase"/>
</dbReference>
<dbReference type="InterPro" id="IPR018239">
    <property type="entry name" value="DNA_ligase_AS"/>
</dbReference>
<dbReference type="InterPro" id="IPR033136">
    <property type="entry name" value="DNA_ligase_CS"/>
</dbReference>
<dbReference type="InterPro" id="IPR013839">
    <property type="entry name" value="DNAligase_adenylation"/>
</dbReference>
<dbReference type="InterPro" id="IPR013840">
    <property type="entry name" value="DNAligase_N"/>
</dbReference>
<dbReference type="InterPro" id="IPR003583">
    <property type="entry name" value="Hlx-hairpin-Hlx_DNA-bd_motif"/>
</dbReference>
<dbReference type="InterPro" id="IPR012340">
    <property type="entry name" value="NA-bd_OB-fold"/>
</dbReference>
<dbReference type="InterPro" id="IPR004150">
    <property type="entry name" value="NAD_DNA_ligase_OB"/>
</dbReference>
<dbReference type="InterPro" id="IPR010994">
    <property type="entry name" value="RuvA_2-like"/>
</dbReference>
<dbReference type="InterPro" id="IPR004149">
    <property type="entry name" value="Znf_DNAligase_C4"/>
</dbReference>
<dbReference type="NCBIfam" id="TIGR00575">
    <property type="entry name" value="dnlj"/>
    <property type="match status" value="1"/>
</dbReference>
<dbReference type="NCBIfam" id="NF005932">
    <property type="entry name" value="PRK07956.1"/>
    <property type="match status" value="1"/>
</dbReference>
<dbReference type="PANTHER" id="PTHR23389">
    <property type="entry name" value="CHROMOSOME TRANSMISSION FIDELITY FACTOR 18"/>
    <property type="match status" value="1"/>
</dbReference>
<dbReference type="PANTHER" id="PTHR23389:SF9">
    <property type="entry name" value="DNA LIGASE"/>
    <property type="match status" value="1"/>
</dbReference>
<dbReference type="Pfam" id="PF00533">
    <property type="entry name" value="BRCT"/>
    <property type="match status" value="1"/>
</dbReference>
<dbReference type="Pfam" id="PF01653">
    <property type="entry name" value="DNA_ligase_aden"/>
    <property type="match status" value="1"/>
</dbReference>
<dbReference type="Pfam" id="PF03120">
    <property type="entry name" value="DNA_ligase_OB"/>
    <property type="match status" value="1"/>
</dbReference>
<dbReference type="Pfam" id="PF03119">
    <property type="entry name" value="DNA_ligase_ZBD"/>
    <property type="match status" value="1"/>
</dbReference>
<dbReference type="Pfam" id="PF12826">
    <property type="entry name" value="HHH_2"/>
    <property type="match status" value="1"/>
</dbReference>
<dbReference type="Pfam" id="PF14520">
    <property type="entry name" value="HHH_5"/>
    <property type="match status" value="1"/>
</dbReference>
<dbReference type="PIRSF" id="PIRSF001604">
    <property type="entry name" value="LigA"/>
    <property type="match status" value="1"/>
</dbReference>
<dbReference type="SMART" id="SM00292">
    <property type="entry name" value="BRCT"/>
    <property type="match status" value="1"/>
</dbReference>
<dbReference type="SMART" id="SM00278">
    <property type="entry name" value="HhH1"/>
    <property type="match status" value="3"/>
</dbReference>
<dbReference type="SMART" id="SM00532">
    <property type="entry name" value="LIGANc"/>
    <property type="match status" value="1"/>
</dbReference>
<dbReference type="SUPFAM" id="SSF52113">
    <property type="entry name" value="BRCT domain"/>
    <property type="match status" value="1"/>
</dbReference>
<dbReference type="SUPFAM" id="SSF56091">
    <property type="entry name" value="DNA ligase/mRNA capping enzyme, catalytic domain"/>
    <property type="match status" value="1"/>
</dbReference>
<dbReference type="SUPFAM" id="SSF50249">
    <property type="entry name" value="Nucleic acid-binding proteins"/>
    <property type="match status" value="1"/>
</dbReference>
<dbReference type="SUPFAM" id="SSF47781">
    <property type="entry name" value="RuvA domain 2-like"/>
    <property type="match status" value="1"/>
</dbReference>
<dbReference type="PROSITE" id="PS50172">
    <property type="entry name" value="BRCT"/>
    <property type="match status" value="1"/>
</dbReference>
<dbReference type="PROSITE" id="PS01055">
    <property type="entry name" value="DNA_LIGASE_N1"/>
    <property type="match status" value="1"/>
</dbReference>
<dbReference type="PROSITE" id="PS01056">
    <property type="entry name" value="DNA_LIGASE_N2"/>
    <property type="match status" value="1"/>
</dbReference>
<reference key="1">
    <citation type="journal article" date="2009" name="J. Bacteriol.">
        <title>Complete genome sequence of Macrococcus caseolyticus strain JCSCS5402, reflecting the ancestral genome of the human-pathogenic staphylococci.</title>
        <authorList>
            <person name="Baba T."/>
            <person name="Kuwahara-Arai K."/>
            <person name="Uchiyama I."/>
            <person name="Takeuchi F."/>
            <person name="Ito T."/>
            <person name="Hiramatsu K."/>
        </authorList>
    </citation>
    <scope>NUCLEOTIDE SEQUENCE [LARGE SCALE GENOMIC DNA]</scope>
    <source>
        <strain>JCSC5402</strain>
    </source>
</reference>
<comment type="function">
    <text evidence="1">DNA ligase that catalyzes the formation of phosphodiester linkages between 5'-phosphoryl and 3'-hydroxyl groups in double-stranded DNA using NAD as a coenzyme and as the energy source for the reaction. It is essential for DNA replication and repair of damaged DNA.</text>
</comment>
<comment type="catalytic activity">
    <reaction evidence="1">
        <text>NAD(+) + (deoxyribonucleotide)n-3'-hydroxyl + 5'-phospho-(deoxyribonucleotide)m = (deoxyribonucleotide)n+m + AMP + beta-nicotinamide D-nucleotide.</text>
        <dbReference type="EC" id="6.5.1.2"/>
    </reaction>
</comment>
<comment type="cofactor">
    <cofactor evidence="1">
        <name>Mg(2+)</name>
        <dbReference type="ChEBI" id="CHEBI:18420"/>
    </cofactor>
    <cofactor evidence="1">
        <name>Mn(2+)</name>
        <dbReference type="ChEBI" id="CHEBI:29035"/>
    </cofactor>
</comment>
<comment type="similarity">
    <text evidence="1">Belongs to the NAD-dependent DNA ligase family. LigA subfamily.</text>
</comment>
<evidence type="ECO:0000255" key="1">
    <source>
        <dbReference type="HAMAP-Rule" id="MF_01588"/>
    </source>
</evidence>
<sequence>MNIEQRVTELHQLLHQYNYEYHVQDNPSVPDSEYDKLLHELIDIEREHPELKTDDSPTVRVGGTPVSAFEKVDHDTPMLSLGNAFSEEDLLAFDKRVKDEVGEVEYMVELKIDGLAVSLKYVDGVFVQGLTRGDGTTGENITQNLKTIHAIPLTLSVPLTFEVRGEAYMPRKSFLALNAYREKVGEPLAANPRNAAAGSLRQLDSKLTAKRKLDIFLYSVNDLRELNAQSQSEALDKLDEIGFKTNHERKLCRNMEEVFEYIKYWTEKRNDLAYDIDGIVIKVNDLSKQDELGFTAKSPKWAIAYKFPAEEVITTLNDIELSIGRTGVVTPTAILEPVKVAGTTVGRASLHNEDLIREKDIRIGDSVVIRKAGEIIPEVVRVVLDRRPEGTKPYNMPEICPSCGHELVRIEGEVALRCINPKCDAKLVEGVIHFVSRTAMNIDGLGERIVEVLYNEDIINDVADLYTLERERLLTLERMGEKKVDKLLAAIEASKTNSLERLLFGLGIRHLGAKASMVLAREFGTMDNLKNATVETLTQIDDIGEKMAQSLVTYLQNEDIINLLEKLEQYGVNMRYTGVTKDDIELHPVFGEKTIVLTGKLTIMSRSEATKALTNLGAKVTNSVTKKTDIVIAGSDAGSKREKADSLGIPVWTEQMMVDALRN</sequence>
<keyword id="KW-0227">DNA damage</keyword>
<keyword id="KW-0234">DNA repair</keyword>
<keyword id="KW-0235">DNA replication</keyword>
<keyword id="KW-0436">Ligase</keyword>
<keyword id="KW-0460">Magnesium</keyword>
<keyword id="KW-0464">Manganese</keyword>
<keyword id="KW-0479">Metal-binding</keyword>
<keyword id="KW-0520">NAD</keyword>
<keyword id="KW-1185">Reference proteome</keyword>
<keyword id="KW-0862">Zinc</keyword>
<accession>B9E830</accession>